<dbReference type="EMBL" id="CP000036">
    <property type="protein sequence ID" value="ABB67772.1"/>
    <property type="molecule type" value="Genomic_DNA"/>
</dbReference>
<dbReference type="RefSeq" id="WP_000022439.1">
    <property type="nucleotide sequence ID" value="NC_007613.1"/>
</dbReference>
<dbReference type="SMR" id="Q31VY6"/>
<dbReference type="GeneID" id="93778697"/>
<dbReference type="KEGG" id="sbo:SBO_3284"/>
<dbReference type="HOGENOM" id="CLU_095787_0_0_6"/>
<dbReference type="Proteomes" id="UP000007067">
    <property type="component" value="Chromosome"/>
</dbReference>
<dbReference type="GO" id="GO:0005886">
    <property type="term" value="C:plasma membrane"/>
    <property type="evidence" value="ECO:0007669"/>
    <property type="project" value="UniProtKB-SubCell"/>
</dbReference>
<dbReference type="GO" id="GO:0008381">
    <property type="term" value="F:mechanosensitive monoatomic ion channel activity"/>
    <property type="evidence" value="ECO:0007669"/>
    <property type="project" value="UniProtKB-UniRule"/>
</dbReference>
<dbReference type="FunFam" id="1.10.1200.120:FF:000001">
    <property type="entry name" value="Large-conductance mechanosensitive channel"/>
    <property type="match status" value="1"/>
</dbReference>
<dbReference type="Gene3D" id="1.10.1200.120">
    <property type="entry name" value="Large-conductance mechanosensitive channel, MscL, domain 1"/>
    <property type="match status" value="1"/>
</dbReference>
<dbReference type="HAMAP" id="MF_00115">
    <property type="entry name" value="MscL"/>
    <property type="match status" value="1"/>
</dbReference>
<dbReference type="InterPro" id="IPR019823">
    <property type="entry name" value="Mechanosensitive_channel_CS"/>
</dbReference>
<dbReference type="InterPro" id="IPR001185">
    <property type="entry name" value="MS_channel"/>
</dbReference>
<dbReference type="InterPro" id="IPR037673">
    <property type="entry name" value="MSC/AndL"/>
</dbReference>
<dbReference type="InterPro" id="IPR036019">
    <property type="entry name" value="MscL_channel"/>
</dbReference>
<dbReference type="NCBIfam" id="TIGR00220">
    <property type="entry name" value="mscL"/>
    <property type="match status" value="1"/>
</dbReference>
<dbReference type="NCBIfam" id="NF001841">
    <property type="entry name" value="PRK00567.1-1"/>
    <property type="match status" value="1"/>
</dbReference>
<dbReference type="NCBIfam" id="NF001843">
    <property type="entry name" value="PRK00567.1-4"/>
    <property type="match status" value="1"/>
</dbReference>
<dbReference type="PANTHER" id="PTHR30266:SF2">
    <property type="entry name" value="LARGE-CONDUCTANCE MECHANOSENSITIVE CHANNEL"/>
    <property type="match status" value="1"/>
</dbReference>
<dbReference type="PANTHER" id="PTHR30266">
    <property type="entry name" value="MECHANOSENSITIVE CHANNEL MSCL"/>
    <property type="match status" value="1"/>
</dbReference>
<dbReference type="Pfam" id="PF01741">
    <property type="entry name" value="MscL"/>
    <property type="match status" value="1"/>
</dbReference>
<dbReference type="PRINTS" id="PR01264">
    <property type="entry name" value="MECHCHANNEL"/>
</dbReference>
<dbReference type="SUPFAM" id="SSF81330">
    <property type="entry name" value="Gated mechanosensitive channel"/>
    <property type="match status" value="1"/>
</dbReference>
<dbReference type="PROSITE" id="PS01327">
    <property type="entry name" value="MSCL"/>
    <property type="match status" value="1"/>
</dbReference>
<accession>Q31VY6</accession>
<keyword id="KW-0997">Cell inner membrane</keyword>
<keyword id="KW-1003">Cell membrane</keyword>
<keyword id="KW-0407">Ion channel</keyword>
<keyword id="KW-0406">Ion transport</keyword>
<keyword id="KW-0472">Membrane</keyword>
<keyword id="KW-0812">Transmembrane</keyword>
<keyword id="KW-1133">Transmembrane helix</keyword>
<keyword id="KW-0813">Transport</keyword>
<feature type="chain" id="PRO_0000238034" description="Large-conductance mechanosensitive channel">
    <location>
        <begin position="1"/>
        <end position="136"/>
    </location>
</feature>
<feature type="transmembrane region" description="Helical" evidence="1">
    <location>
        <begin position="10"/>
        <end position="30"/>
    </location>
</feature>
<feature type="transmembrane region" description="Helical" evidence="1">
    <location>
        <begin position="76"/>
        <end position="96"/>
    </location>
</feature>
<sequence length="136" mass="14927">MSIIKEFREFAMRGNVVDLAVGVIIGAAFGKIVSSLVADIIMPPLGLLIGGIDFKQFAVTLRDAQGDIPAVVMHYGVFIQNVFDFLIVAFAIFMAIKLINKLNRKKEEPAAAPAPTKEEVLLAEIRDLLKEQNNRS</sequence>
<comment type="function">
    <text evidence="1">Channel that opens in response to stretch forces in the membrane lipid bilayer. May participate in the regulation of osmotic pressure changes within the cell.</text>
</comment>
<comment type="subunit">
    <text evidence="1">Homopentamer.</text>
</comment>
<comment type="subcellular location">
    <subcellularLocation>
        <location evidence="1">Cell inner membrane</location>
        <topology evidence="1">Multi-pass membrane protein</topology>
    </subcellularLocation>
</comment>
<comment type="similarity">
    <text evidence="1">Belongs to the MscL family.</text>
</comment>
<organism>
    <name type="scientific">Shigella boydii serotype 4 (strain Sb227)</name>
    <dbReference type="NCBI Taxonomy" id="300268"/>
    <lineage>
        <taxon>Bacteria</taxon>
        <taxon>Pseudomonadati</taxon>
        <taxon>Pseudomonadota</taxon>
        <taxon>Gammaproteobacteria</taxon>
        <taxon>Enterobacterales</taxon>
        <taxon>Enterobacteriaceae</taxon>
        <taxon>Shigella</taxon>
    </lineage>
</organism>
<name>MSCL_SHIBS</name>
<protein>
    <recommendedName>
        <fullName evidence="1">Large-conductance mechanosensitive channel</fullName>
    </recommendedName>
</protein>
<proteinExistence type="inferred from homology"/>
<reference key="1">
    <citation type="journal article" date="2005" name="Nucleic Acids Res.">
        <title>Genome dynamics and diversity of Shigella species, the etiologic agents of bacillary dysentery.</title>
        <authorList>
            <person name="Yang F."/>
            <person name="Yang J."/>
            <person name="Zhang X."/>
            <person name="Chen L."/>
            <person name="Jiang Y."/>
            <person name="Yan Y."/>
            <person name="Tang X."/>
            <person name="Wang J."/>
            <person name="Xiong Z."/>
            <person name="Dong J."/>
            <person name="Xue Y."/>
            <person name="Zhu Y."/>
            <person name="Xu X."/>
            <person name="Sun L."/>
            <person name="Chen S."/>
            <person name="Nie H."/>
            <person name="Peng J."/>
            <person name="Xu J."/>
            <person name="Wang Y."/>
            <person name="Yuan Z."/>
            <person name="Wen Y."/>
            <person name="Yao Z."/>
            <person name="Shen Y."/>
            <person name="Qiang B."/>
            <person name="Hou Y."/>
            <person name="Yu J."/>
            <person name="Jin Q."/>
        </authorList>
    </citation>
    <scope>NUCLEOTIDE SEQUENCE [LARGE SCALE GENOMIC DNA]</scope>
    <source>
        <strain>Sb227</strain>
    </source>
</reference>
<gene>
    <name evidence="1" type="primary">mscL</name>
    <name type="ordered locus">SBO_3284</name>
</gene>
<evidence type="ECO:0000255" key="1">
    <source>
        <dbReference type="HAMAP-Rule" id="MF_00115"/>
    </source>
</evidence>